<name>DABA1_SORC5</name>
<organism>
    <name type="scientific">Sorangium cellulosum (strain So ce56)</name>
    <name type="common">Polyangium cellulosum (strain So ce56)</name>
    <dbReference type="NCBI Taxonomy" id="448385"/>
    <lineage>
        <taxon>Bacteria</taxon>
        <taxon>Pseudomonadati</taxon>
        <taxon>Myxococcota</taxon>
        <taxon>Polyangia</taxon>
        <taxon>Polyangiales</taxon>
        <taxon>Polyangiaceae</taxon>
        <taxon>Sorangium</taxon>
    </lineage>
</organism>
<gene>
    <name evidence="1" type="primary">dabA1</name>
    <name type="ordered locus">sce4789</name>
</gene>
<protein>
    <recommendedName>
        <fullName evidence="1">Probable inorganic carbon transporter subunit DabA 1</fullName>
    </recommendedName>
</protein>
<keyword id="KW-0997">Cell inner membrane</keyword>
<keyword id="KW-1003">Cell membrane</keyword>
<keyword id="KW-0472">Membrane</keyword>
<keyword id="KW-0479">Metal-binding</keyword>
<keyword id="KW-1185">Reference proteome</keyword>
<keyword id="KW-0813">Transport</keyword>
<keyword id="KW-0862">Zinc</keyword>
<evidence type="ECO:0000255" key="1">
    <source>
        <dbReference type="HAMAP-Rule" id="MF_01871"/>
    </source>
</evidence>
<evidence type="ECO:0000256" key="2">
    <source>
        <dbReference type="SAM" id="MobiDB-lite"/>
    </source>
</evidence>
<reference key="1">
    <citation type="journal article" date="2007" name="Nat. Biotechnol.">
        <title>Complete genome sequence of the myxobacterium Sorangium cellulosum.</title>
        <authorList>
            <person name="Schneiker S."/>
            <person name="Perlova O."/>
            <person name="Kaiser O."/>
            <person name="Gerth K."/>
            <person name="Alici A."/>
            <person name="Altmeyer M.O."/>
            <person name="Bartels D."/>
            <person name="Bekel T."/>
            <person name="Beyer S."/>
            <person name="Bode E."/>
            <person name="Bode H.B."/>
            <person name="Bolten C.J."/>
            <person name="Choudhuri J.V."/>
            <person name="Doss S."/>
            <person name="Elnakady Y.A."/>
            <person name="Frank B."/>
            <person name="Gaigalat L."/>
            <person name="Goesmann A."/>
            <person name="Groeger C."/>
            <person name="Gross F."/>
            <person name="Jelsbak L."/>
            <person name="Jelsbak L."/>
            <person name="Kalinowski J."/>
            <person name="Kegler C."/>
            <person name="Knauber T."/>
            <person name="Konietzny S."/>
            <person name="Kopp M."/>
            <person name="Krause L."/>
            <person name="Krug D."/>
            <person name="Linke B."/>
            <person name="Mahmud T."/>
            <person name="Martinez-Arias R."/>
            <person name="McHardy A.C."/>
            <person name="Merai M."/>
            <person name="Meyer F."/>
            <person name="Mormann S."/>
            <person name="Munoz-Dorado J."/>
            <person name="Perez J."/>
            <person name="Pradella S."/>
            <person name="Rachid S."/>
            <person name="Raddatz G."/>
            <person name="Rosenau F."/>
            <person name="Rueckert C."/>
            <person name="Sasse F."/>
            <person name="Scharfe M."/>
            <person name="Schuster S.C."/>
            <person name="Suen G."/>
            <person name="Treuner-Lange A."/>
            <person name="Velicer G.J."/>
            <person name="Vorholter F.-J."/>
            <person name="Weissman K.J."/>
            <person name="Welch R.D."/>
            <person name="Wenzel S.C."/>
            <person name="Whitworth D.E."/>
            <person name="Wilhelm S."/>
            <person name="Wittmann C."/>
            <person name="Bloecker H."/>
            <person name="Puehler A."/>
            <person name="Mueller R."/>
        </authorList>
    </citation>
    <scope>NUCLEOTIDE SEQUENCE [LARGE SCALE GENOMIC DNA]</scope>
    <source>
        <strain>So ce56</strain>
    </source>
</reference>
<feature type="chain" id="PRO_0000387301" description="Probable inorganic carbon transporter subunit DabA 1">
    <location>
        <begin position="1"/>
        <end position="1019"/>
    </location>
</feature>
<feature type="region of interest" description="Disordered" evidence="2">
    <location>
        <begin position="624"/>
        <end position="643"/>
    </location>
</feature>
<feature type="binding site" evidence="1">
    <location>
        <position position="491"/>
    </location>
    <ligand>
        <name>Zn(2+)</name>
        <dbReference type="ChEBI" id="CHEBI:29105"/>
    </ligand>
</feature>
<feature type="binding site" evidence="1">
    <location>
        <position position="493"/>
    </location>
    <ligand>
        <name>Zn(2+)</name>
        <dbReference type="ChEBI" id="CHEBI:29105"/>
    </ligand>
</feature>
<feature type="binding site" evidence="1">
    <location>
        <position position="676"/>
    </location>
    <ligand>
        <name>Zn(2+)</name>
        <dbReference type="ChEBI" id="CHEBI:29105"/>
    </ligand>
</feature>
<feature type="binding site" evidence="1">
    <location>
        <position position="691"/>
    </location>
    <ligand>
        <name>Zn(2+)</name>
        <dbReference type="ChEBI" id="CHEBI:29105"/>
    </ligand>
</feature>
<comment type="function">
    <text evidence="1">Part of an energy-coupled inorganic carbon pump.</text>
</comment>
<comment type="cofactor">
    <cofactor evidence="1">
        <name>Zn(2+)</name>
        <dbReference type="ChEBI" id="CHEBI:29105"/>
    </cofactor>
</comment>
<comment type="subunit">
    <text evidence="1">Forms a complex with DabB.</text>
</comment>
<comment type="subcellular location">
    <subcellularLocation>
        <location evidence="1">Cell inner membrane</location>
        <topology evidence="1">Peripheral membrane protein</topology>
    </subcellularLocation>
</comment>
<comment type="similarity">
    <text evidence="1">Belongs to the inorganic carbon transporter (TC 9.A.2) DabA family.</text>
</comment>
<dbReference type="EMBL" id="AM746676">
    <property type="protein sequence ID" value="CAN94952.1"/>
    <property type="molecule type" value="Genomic_DNA"/>
</dbReference>
<dbReference type="RefSeq" id="WP_012237421.1">
    <property type="nucleotide sequence ID" value="NC_010162.1"/>
</dbReference>
<dbReference type="STRING" id="448385.sce4789"/>
<dbReference type="KEGG" id="scl:sce4789"/>
<dbReference type="eggNOG" id="COG3002">
    <property type="taxonomic scope" value="Bacteria"/>
</dbReference>
<dbReference type="HOGENOM" id="CLU_009885_0_0_7"/>
<dbReference type="OrthoDB" id="9805101at2"/>
<dbReference type="BioCyc" id="SCEL448385:SCE_RS24590-MONOMER"/>
<dbReference type="Proteomes" id="UP000002139">
    <property type="component" value="Chromosome"/>
</dbReference>
<dbReference type="GO" id="GO:0005886">
    <property type="term" value="C:plasma membrane"/>
    <property type="evidence" value="ECO:0007669"/>
    <property type="project" value="UniProtKB-SubCell"/>
</dbReference>
<dbReference type="GO" id="GO:0008270">
    <property type="term" value="F:zinc ion binding"/>
    <property type="evidence" value="ECO:0007669"/>
    <property type="project" value="UniProtKB-UniRule"/>
</dbReference>
<dbReference type="HAMAP" id="MF_01871">
    <property type="entry name" value="DabA"/>
    <property type="match status" value="1"/>
</dbReference>
<dbReference type="InterPro" id="IPR018752">
    <property type="entry name" value="DabA"/>
</dbReference>
<dbReference type="PANTHER" id="PTHR38344:SF1">
    <property type="entry name" value="INORGANIC CARBON TRANSPORTER SUBUNIT DABA-RELATED"/>
    <property type="match status" value="1"/>
</dbReference>
<dbReference type="PANTHER" id="PTHR38344">
    <property type="entry name" value="UPF0753 PROTEIN AQ_863"/>
    <property type="match status" value="1"/>
</dbReference>
<dbReference type="Pfam" id="PF10070">
    <property type="entry name" value="DabA"/>
    <property type="match status" value="1"/>
</dbReference>
<accession>A9FF39</accession>
<proteinExistence type="inferred from homology"/>
<sequence length="1019" mass="111829">MNSELSQDLGASAARQEHLRDVVEHAGHLLPAQGPIGVFVHHNTLHAFQHLPFHDALAAASAIFEAEPYLSEADYRAHIASGRIGDEDLEAALAGRFAAQPDERRGPLSRREIERLALRHPIEAETAAGLLWRISEAGETRRLRADVPDERRRRMVQSTERWLEARPEIAARLLDRAGRDPEARAALALWDACRAVPLPPAPPLEPPLVERVGEGRSHRDLLVELAGEDPAELIDPLMIRFLGAYLDEGIAHWTMPDRAKGLWRCFRDMALEGSRLAAPAFVGLDAELRRFDAEALSPPAIAVRALEELSVAEDHWDVYVTRVLLELPGWAGMIHRLEHTPSDRPPGSPPVSLVEYLAARLTLARYALRDVARRRLGYRGPLAGLVEHARRAARPPAPPSSSPDHARPFRLFQLAQLAGLSAAEIEPLSKAERVWALEALEAFDEITRRRVLHEAYEHHHRTEVLHGIAANLRRPEEERSVEAPRFQVAFCIDDRCEGLRRHFEELSPRHETFGVAGFFGVPIRYRGLDDAGHVSLCPVGVEPAHEIVERPHEEEAGWRRKARRKRWARFLHALGRGTRTLARGVLLTPTLGLLSTVPLVGRTLFPRAAARLRRALERRLLPPVPTRLHSPRDEGSAAGGEGQPFTAAAKAARVAATLENMGLTRGFAPIVVVLGHGATSVNNPHQSAYDCGACGGRHGGPNARLFAAMANDSEVRVLLAARGIDIPDGTFFLGGMNNTTTDEIVLYDQHLVPSSHRGELSALIGALDAARQQHAHERCRRFASAPREGDAARALAHVEARAADLSEARPELGHVTNAVCVVGRRSLTRGLFLDRRAFLVSYDPIQDQGGAILERVLLAVGPVGAGINLEYYFSCVDNRRYGAGTKLPHNLASLLGVMEGSLSDLRTGLPKQMIEIHEPVRLLVVVEASTDTAAALYARQPALRELIGNGWIQLACVDPATRRIACFTGDGFAPFSPPDQPLPAVQRSADWYAGRSGFVPPALIRAASTRPREVVDHAV</sequence>